<name>P53_ICTPU</name>
<sequence length="376" mass="41989">MEGNGERDTMMVEPPDSQEFAELWLRNLIVRDNSLWGKEEEIPDDLQEVPCDVLLSDMLQPQSSSSPPTSTVPVTSDYPGLLNFTLHFQESSGTKSVTCTYSPDLNKLFCQLAKTCPVLMAVSSSPPPGSVLRATAVYKRSEHVAEVVRRCPHHERSNDSSDGPAPPGHLLRVEGNSRAVYQEDGNTQAHSVVVPYEPPQVGSQSTTVLYNYMCNSSCMGGMNRRPILTIITLETQDGHLLGRRTFEVRVCACPGRDRKTEESNFKKQQEPKTSGKTLTKRSMKDPPSHPEASKKSKNSSSDDEIYTLQVRGKERYEFLKKINDGLELSDVVPPADQEKYRQKLLSKTCRKERDGAAGEPKRGKKRLVKEEKCDSD</sequence>
<reference key="1">
    <citation type="journal article" date="1998" name="Comp. Biochem. Physiol.">
        <title>Identification and characterization of the tumor suppressor p53 in channel catfish (Ictalurus punctatus).</title>
        <authorList>
            <person name="Luft J.C."/>
            <person name="Bengten E."/>
            <person name="Clem L.W."/>
            <person name="Miller N.W."/>
            <person name="Wilson M.R."/>
        </authorList>
    </citation>
    <scope>NUCLEOTIDE SEQUENCE [MRNA]</scope>
</reference>
<keyword id="KW-0010">Activator</keyword>
<keyword id="KW-0053">Apoptosis</keyword>
<keyword id="KW-0131">Cell cycle</keyword>
<keyword id="KW-0963">Cytoplasm</keyword>
<keyword id="KW-0238">DNA-binding</keyword>
<keyword id="KW-0479">Metal-binding</keyword>
<keyword id="KW-0539">Nucleus</keyword>
<keyword id="KW-0597">Phosphoprotein</keyword>
<keyword id="KW-0804">Transcription</keyword>
<keyword id="KW-0805">Transcription regulation</keyword>
<keyword id="KW-0043">Tumor suppressor</keyword>
<keyword id="KW-0862">Zinc</keyword>
<proteinExistence type="evidence at transcript level"/>
<comment type="function">
    <text evidence="1">Multifunctional transcription factor that induces cell cycle arrest, DNA repair or apoptosis upon binding to its target DNA sequence. Acts as a tumor suppressor in many tumor types; induces growth arrest or apoptosis depending on the physiological circumstances and cell type. Negatively regulates cell division by controlling expression of a set of genes required for this process. One of the activated genes is an inhibitor of cyclin-dependent kinases. Apoptosis induction seems to be mediated either by stimulation of BAX and FAS antigen expression, or by repression of Bcl-2 expression (By similarity).</text>
</comment>
<comment type="cofactor">
    <cofactor evidence="1">
        <name>Zn(2+)</name>
        <dbReference type="ChEBI" id="CHEBI:29105"/>
    </cofactor>
    <text evidence="1">Binds 1 zinc ion per subunit.</text>
</comment>
<comment type="subunit">
    <text evidence="1">Binds DNA as a homotetramer.</text>
</comment>
<comment type="subcellular location">
    <subcellularLocation>
        <location evidence="1">Cytoplasm</location>
    </subcellularLocation>
    <subcellularLocation>
        <location evidence="1">Nucleus</location>
    </subcellularLocation>
</comment>
<comment type="domain">
    <text evidence="2">The N-terminal and C-terminal disordered regions undergo liquid-liquid phase separation (LLPS) following homotetramerization and activation. Post-translational modifications, such as phosphorylation or lactylation affect the ability to undergo LLPS.</text>
</comment>
<comment type="domain">
    <text evidence="2">The nuclear export signal acts as a transcriptional repression domain. The TADI and TADII motifs (residues 17 to 25 and 48 to 56) correspond both to 9aaTAD motifs which are transactivation domains present in a large number of yeast and animal transcription factors.</text>
</comment>
<comment type="similarity">
    <text evidence="4">Belongs to the p53 family.</text>
</comment>
<dbReference type="EMBL" id="AF074967">
    <property type="protein sequence ID" value="AAC26824.1"/>
    <property type="molecule type" value="mRNA"/>
</dbReference>
<dbReference type="RefSeq" id="NP_001187005.1">
    <property type="nucleotide sequence ID" value="NM_001200076.1"/>
</dbReference>
<dbReference type="SMR" id="O93379"/>
<dbReference type="STRING" id="7998.ENSIPUP00000031919"/>
<dbReference type="GeneID" id="100304476"/>
<dbReference type="KEGG" id="ipu:100304476"/>
<dbReference type="CTD" id="7157"/>
<dbReference type="OrthoDB" id="5915660at2759"/>
<dbReference type="Proteomes" id="UP000221080">
    <property type="component" value="Chromosome 28"/>
</dbReference>
<dbReference type="GO" id="GO:0005737">
    <property type="term" value="C:cytoplasm"/>
    <property type="evidence" value="ECO:0000250"/>
    <property type="project" value="UniProtKB"/>
</dbReference>
<dbReference type="GO" id="GO:0005739">
    <property type="term" value="C:mitochondrion"/>
    <property type="evidence" value="ECO:0000250"/>
    <property type="project" value="UniProtKB"/>
</dbReference>
<dbReference type="GO" id="GO:0005634">
    <property type="term" value="C:nucleus"/>
    <property type="evidence" value="ECO:0000250"/>
    <property type="project" value="UniProtKB"/>
</dbReference>
<dbReference type="GO" id="GO:0000981">
    <property type="term" value="F:DNA-binding transcription factor activity, RNA polymerase II-specific"/>
    <property type="evidence" value="ECO:0007669"/>
    <property type="project" value="TreeGrafter"/>
</dbReference>
<dbReference type="GO" id="GO:0046872">
    <property type="term" value="F:metal ion binding"/>
    <property type="evidence" value="ECO:0007669"/>
    <property type="project" value="UniProtKB-KW"/>
</dbReference>
<dbReference type="GO" id="GO:0140693">
    <property type="term" value="F:molecular condensate scaffold activity"/>
    <property type="evidence" value="ECO:0000250"/>
    <property type="project" value="UniProtKB"/>
</dbReference>
<dbReference type="GO" id="GO:1990841">
    <property type="term" value="F:promoter-specific chromatin binding"/>
    <property type="evidence" value="ECO:0000250"/>
    <property type="project" value="UniProtKB"/>
</dbReference>
<dbReference type="GO" id="GO:0000978">
    <property type="term" value="F:RNA polymerase II cis-regulatory region sequence-specific DNA binding"/>
    <property type="evidence" value="ECO:0007669"/>
    <property type="project" value="TreeGrafter"/>
</dbReference>
<dbReference type="GO" id="GO:0009653">
    <property type="term" value="P:anatomical structure morphogenesis"/>
    <property type="evidence" value="ECO:0007669"/>
    <property type="project" value="UniProtKB-ARBA"/>
</dbReference>
<dbReference type="GO" id="GO:0006915">
    <property type="term" value="P:apoptotic process"/>
    <property type="evidence" value="ECO:0007669"/>
    <property type="project" value="UniProtKB-KW"/>
</dbReference>
<dbReference type="GO" id="GO:0006974">
    <property type="term" value="P:DNA damage response"/>
    <property type="evidence" value="ECO:0000250"/>
    <property type="project" value="UniProtKB"/>
</dbReference>
<dbReference type="GO" id="GO:0060429">
    <property type="term" value="P:epithelium development"/>
    <property type="evidence" value="ECO:0007669"/>
    <property type="project" value="UniProtKB-ARBA"/>
</dbReference>
<dbReference type="GO" id="GO:0045944">
    <property type="term" value="P:positive regulation of transcription by RNA polymerase II"/>
    <property type="evidence" value="ECO:0000250"/>
    <property type="project" value="UniProtKB"/>
</dbReference>
<dbReference type="GO" id="GO:0051262">
    <property type="term" value="P:protein tetramerization"/>
    <property type="evidence" value="ECO:0007669"/>
    <property type="project" value="InterPro"/>
</dbReference>
<dbReference type="CDD" id="cd08367">
    <property type="entry name" value="P53"/>
    <property type="match status" value="1"/>
</dbReference>
<dbReference type="FunFam" id="2.60.40.720:FF:000003">
    <property type="entry name" value="Cellular tumor antigen p53"/>
    <property type="match status" value="1"/>
</dbReference>
<dbReference type="FunFam" id="4.10.170.10:FF:000005">
    <property type="entry name" value="Cellular tumor antigen p53"/>
    <property type="match status" value="1"/>
</dbReference>
<dbReference type="Gene3D" id="2.60.40.720">
    <property type="match status" value="1"/>
</dbReference>
<dbReference type="Gene3D" id="4.10.170.10">
    <property type="entry name" value="p53-like tetramerisation domain"/>
    <property type="match status" value="1"/>
</dbReference>
<dbReference type="InterPro" id="IPR008967">
    <property type="entry name" value="p53-like_TF_DNA-bd_sf"/>
</dbReference>
<dbReference type="InterPro" id="IPR012346">
    <property type="entry name" value="p53/RUNT-type_TF_DNA-bd_sf"/>
</dbReference>
<dbReference type="InterPro" id="IPR011615">
    <property type="entry name" value="p53_DNA-bd"/>
</dbReference>
<dbReference type="InterPro" id="IPR036674">
    <property type="entry name" value="p53_tetramer_sf"/>
</dbReference>
<dbReference type="InterPro" id="IPR010991">
    <property type="entry name" value="p53_tetrameristn"/>
</dbReference>
<dbReference type="InterPro" id="IPR002117">
    <property type="entry name" value="p53_tumour_suppressor"/>
</dbReference>
<dbReference type="PANTHER" id="PTHR11447">
    <property type="entry name" value="CELLULAR TUMOR ANTIGEN P53"/>
    <property type="match status" value="1"/>
</dbReference>
<dbReference type="PANTHER" id="PTHR11447:SF6">
    <property type="entry name" value="CELLULAR TUMOR ANTIGEN P53"/>
    <property type="match status" value="1"/>
</dbReference>
<dbReference type="Pfam" id="PF00870">
    <property type="entry name" value="P53"/>
    <property type="match status" value="1"/>
</dbReference>
<dbReference type="Pfam" id="PF07710">
    <property type="entry name" value="P53_tetramer"/>
    <property type="match status" value="1"/>
</dbReference>
<dbReference type="PRINTS" id="PR00386">
    <property type="entry name" value="P53SUPPRESSR"/>
</dbReference>
<dbReference type="SUPFAM" id="SSF47719">
    <property type="entry name" value="p53 tetramerization domain"/>
    <property type="match status" value="1"/>
</dbReference>
<dbReference type="SUPFAM" id="SSF49417">
    <property type="entry name" value="p53-like transcription factors"/>
    <property type="match status" value="1"/>
</dbReference>
<dbReference type="PROSITE" id="PS00348">
    <property type="entry name" value="P53"/>
    <property type="match status" value="1"/>
</dbReference>
<evidence type="ECO:0000250" key="1"/>
<evidence type="ECO:0000250" key="2">
    <source>
        <dbReference type="UniProtKB" id="P04637"/>
    </source>
</evidence>
<evidence type="ECO:0000256" key="3">
    <source>
        <dbReference type="SAM" id="MobiDB-lite"/>
    </source>
</evidence>
<evidence type="ECO:0000305" key="4"/>
<protein>
    <recommendedName>
        <fullName>Cellular tumor antigen p53</fullName>
    </recommendedName>
    <alternativeName>
        <fullName>Tumor suppressor p53</fullName>
    </alternativeName>
</protein>
<organism>
    <name type="scientific">Ictalurus punctatus</name>
    <name type="common">Channel catfish</name>
    <name type="synonym">Silurus punctatus</name>
    <dbReference type="NCBI Taxonomy" id="7998"/>
    <lineage>
        <taxon>Eukaryota</taxon>
        <taxon>Metazoa</taxon>
        <taxon>Chordata</taxon>
        <taxon>Craniata</taxon>
        <taxon>Vertebrata</taxon>
        <taxon>Euteleostomi</taxon>
        <taxon>Actinopterygii</taxon>
        <taxon>Neopterygii</taxon>
        <taxon>Teleostei</taxon>
        <taxon>Ostariophysi</taxon>
        <taxon>Siluriformes</taxon>
        <taxon>Ictaluridae</taxon>
        <taxon>Ictalurus</taxon>
    </lineage>
</organism>
<feature type="chain" id="PRO_0000185719" description="Cellular tumor antigen p53">
    <location>
        <begin position="1"/>
        <end position="376"/>
    </location>
</feature>
<feature type="DNA-binding region" evidence="1">
    <location>
        <begin position="77"/>
        <end position="268"/>
    </location>
</feature>
<feature type="region of interest" description="Transcription activation (acidic)">
    <location>
        <begin position="1"/>
        <end position="36"/>
    </location>
</feature>
<feature type="region of interest" description="Disordered" evidence="3">
    <location>
        <begin position="150"/>
        <end position="171"/>
    </location>
</feature>
<feature type="region of interest" description="Interaction with DNA" evidence="1">
    <location>
        <begin position="249"/>
        <end position="256"/>
    </location>
</feature>
<feature type="region of interest" description="Disordered" evidence="3">
    <location>
        <begin position="257"/>
        <end position="306"/>
    </location>
</feature>
<feature type="region of interest" description="Oligomerization">
    <location>
        <begin position="303"/>
        <end position="334"/>
    </location>
</feature>
<feature type="region of interest" description="Disordered" evidence="3">
    <location>
        <begin position="342"/>
        <end position="376"/>
    </location>
</feature>
<feature type="region of interest" description="Basic (repression of DNA-binding)">
    <location>
        <begin position="347"/>
        <end position="372"/>
    </location>
</feature>
<feature type="short sequence motif" description="Bipartite nuclear localization signal" evidence="1">
    <location>
        <begin position="280"/>
        <end position="297"/>
    </location>
</feature>
<feature type="short sequence motif" description="Nuclear export signal" evidence="1">
    <location>
        <begin position="317"/>
        <end position="328"/>
    </location>
</feature>
<feature type="compositionally biased region" description="Basic and acidic residues" evidence="3">
    <location>
        <begin position="150"/>
        <end position="159"/>
    </location>
</feature>
<feature type="compositionally biased region" description="Basic and acidic residues" evidence="3">
    <location>
        <begin position="257"/>
        <end position="270"/>
    </location>
</feature>
<feature type="compositionally biased region" description="Basic and acidic residues" evidence="3">
    <location>
        <begin position="282"/>
        <end position="294"/>
    </location>
</feature>
<feature type="compositionally biased region" description="Basic and acidic residues" evidence="3">
    <location>
        <begin position="349"/>
        <end position="361"/>
    </location>
</feature>
<feature type="binding site" evidence="1">
    <location>
        <position position="151"/>
    </location>
    <ligand>
        <name>Zn(2+)</name>
        <dbReference type="ChEBI" id="CHEBI:29105"/>
    </ligand>
</feature>
<feature type="binding site" evidence="1">
    <location>
        <position position="154"/>
    </location>
    <ligand>
        <name>Zn(2+)</name>
        <dbReference type="ChEBI" id="CHEBI:29105"/>
    </ligand>
</feature>
<feature type="binding site" evidence="1">
    <location>
        <position position="214"/>
    </location>
    <ligand>
        <name>Zn(2+)</name>
        <dbReference type="ChEBI" id="CHEBI:29105"/>
    </ligand>
</feature>
<feature type="binding site" evidence="1">
    <location>
        <position position="218"/>
    </location>
    <ligand>
        <name>Zn(2+)</name>
        <dbReference type="ChEBI" id="CHEBI:29105"/>
    </ligand>
</feature>
<feature type="site" description="Interaction with DNA" evidence="1">
    <location>
        <position position="95"/>
    </location>
</feature>
<gene>
    <name type="primary">tp53</name>
    <name type="synonym">p53</name>
</gene>
<accession>O93379</accession>